<dbReference type="EC" id="3.1.1.5"/>
<dbReference type="EMBL" id="CP000501">
    <property type="protein sequence ID" value="ABN68251.2"/>
    <property type="molecule type" value="Genomic_DNA"/>
</dbReference>
<dbReference type="RefSeq" id="XP_001386280.2">
    <property type="nucleotide sequence ID" value="XM_001386243.1"/>
</dbReference>
<dbReference type="SMR" id="A3LYZ4"/>
<dbReference type="FunCoup" id="A3LYZ4">
    <property type="interactions" value="127"/>
</dbReference>
<dbReference type="STRING" id="322104.A3LYZ4"/>
<dbReference type="GeneID" id="4840528"/>
<dbReference type="KEGG" id="pic:PICST_33358"/>
<dbReference type="eggNOG" id="KOG2968">
    <property type="taxonomic scope" value="Eukaryota"/>
</dbReference>
<dbReference type="HOGENOM" id="CLU_000960_1_1_1"/>
<dbReference type="InParanoid" id="A3LYZ4"/>
<dbReference type="OMA" id="SSGYVWR"/>
<dbReference type="OrthoDB" id="421051at2759"/>
<dbReference type="Proteomes" id="UP000002258">
    <property type="component" value="Chromosome 7"/>
</dbReference>
<dbReference type="GO" id="GO:0005789">
    <property type="term" value="C:endoplasmic reticulum membrane"/>
    <property type="evidence" value="ECO:0007669"/>
    <property type="project" value="UniProtKB-SubCell"/>
</dbReference>
<dbReference type="GO" id="GO:0004622">
    <property type="term" value="F:lysophospholipase activity"/>
    <property type="evidence" value="ECO:0007669"/>
    <property type="project" value="UniProtKB-EC"/>
</dbReference>
<dbReference type="GO" id="GO:0046486">
    <property type="term" value="P:glycerolipid metabolic process"/>
    <property type="evidence" value="ECO:0007669"/>
    <property type="project" value="UniProtKB-ARBA"/>
</dbReference>
<dbReference type="GO" id="GO:0016042">
    <property type="term" value="P:lipid catabolic process"/>
    <property type="evidence" value="ECO:0007669"/>
    <property type="project" value="UniProtKB-KW"/>
</dbReference>
<dbReference type="CDD" id="cd00038">
    <property type="entry name" value="CAP_ED"/>
    <property type="match status" value="2"/>
</dbReference>
<dbReference type="FunFam" id="3.40.1090.10:FF:000013">
    <property type="entry name" value="Lysophospholipase NTE1"/>
    <property type="match status" value="1"/>
</dbReference>
<dbReference type="Gene3D" id="3.40.1090.10">
    <property type="entry name" value="Cytosolic phospholipase A2 catalytic domain"/>
    <property type="match status" value="2"/>
</dbReference>
<dbReference type="Gene3D" id="2.60.120.10">
    <property type="entry name" value="Jelly Rolls"/>
    <property type="match status" value="2"/>
</dbReference>
<dbReference type="InterPro" id="IPR016035">
    <property type="entry name" value="Acyl_Trfase/lysoPLipase"/>
</dbReference>
<dbReference type="InterPro" id="IPR000595">
    <property type="entry name" value="cNMP-bd_dom"/>
</dbReference>
<dbReference type="InterPro" id="IPR018490">
    <property type="entry name" value="cNMP-bd_dom_sf"/>
</dbReference>
<dbReference type="InterPro" id="IPR050301">
    <property type="entry name" value="NTE"/>
</dbReference>
<dbReference type="InterPro" id="IPR056556">
    <property type="entry name" value="NTE1_P-loop_dom"/>
</dbReference>
<dbReference type="InterPro" id="IPR002641">
    <property type="entry name" value="PNPLA_dom"/>
</dbReference>
<dbReference type="InterPro" id="IPR014710">
    <property type="entry name" value="RmlC-like_jellyroll"/>
</dbReference>
<dbReference type="PANTHER" id="PTHR14226:SF29">
    <property type="entry name" value="NEUROPATHY TARGET ESTERASE SWS"/>
    <property type="match status" value="1"/>
</dbReference>
<dbReference type="PANTHER" id="PTHR14226">
    <property type="entry name" value="NEUROPATHY TARGET ESTERASE/SWISS CHEESE D.MELANOGASTER"/>
    <property type="match status" value="1"/>
</dbReference>
<dbReference type="Pfam" id="PF24179">
    <property type="entry name" value="NTE_Ploop"/>
    <property type="match status" value="1"/>
</dbReference>
<dbReference type="Pfam" id="PF01734">
    <property type="entry name" value="Patatin"/>
    <property type="match status" value="1"/>
</dbReference>
<dbReference type="SMART" id="SM00100">
    <property type="entry name" value="cNMP"/>
    <property type="match status" value="1"/>
</dbReference>
<dbReference type="SUPFAM" id="SSF51206">
    <property type="entry name" value="cAMP-binding domain-like"/>
    <property type="match status" value="2"/>
</dbReference>
<dbReference type="SUPFAM" id="SSF52151">
    <property type="entry name" value="FabD/lysophospholipase-like"/>
    <property type="match status" value="1"/>
</dbReference>
<dbReference type="PROSITE" id="PS50042">
    <property type="entry name" value="CNMP_BINDING_3"/>
    <property type="match status" value="2"/>
</dbReference>
<dbReference type="PROSITE" id="PS51635">
    <property type="entry name" value="PNPLA"/>
    <property type="match status" value="1"/>
</dbReference>
<organism>
    <name type="scientific">Scheffersomyces stipitis (strain ATCC 58785 / CBS 6054 / NBRC 10063 / NRRL Y-11545)</name>
    <name type="common">Yeast</name>
    <name type="synonym">Pichia stipitis</name>
    <dbReference type="NCBI Taxonomy" id="322104"/>
    <lineage>
        <taxon>Eukaryota</taxon>
        <taxon>Fungi</taxon>
        <taxon>Dikarya</taxon>
        <taxon>Ascomycota</taxon>
        <taxon>Saccharomycotina</taxon>
        <taxon>Pichiomycetes</taxon>
        <taxon>Debaryomycetaceae</taxon>
        <taxon>Scheffersomyces</taxon>
    </lineage>
</organism>
<evidence type="ECO:0000250" key="1"/>
<evidence type="ECO:0000255" key="2"/>
<evidence type="ECO:0000255" key="3">
    <source>
        <dbReference type="PROSITE-ProRule" id="PRU01161"/>
    </source>
</evidence>
<evidence type="ECO:0000305" key="4"/>
<reference key="1">
    <citation type="journal article" date="2007" name="Nat. Biotechnol.">
        <title>Genome sequence of the lignocellulose-bioconverting and xylose-fermenting yeast Pichia stipitis.</title>
        <authorList>
            <person name="Jeffries T.W."/>
            <person name="Grigoriev I.V."/>
            <person name="Grimwood J."/>
            <person name="Laplaza J.M."/>
            <person name="Aerts A."/>
            <person name="Salamov A."/>
            <person name="Schmutz J."/>
            <person name="Lindquist E."/>
            <person name="Dehal P."/>
            <person name="Shapiro H."/>
            <person name="Jin Y.-S."/>
            <person name="Passoth V."/>
            <person name="Richardson P.M."/>
        </authorList>
    </citation>
    <scope>NUCLEOTIDE SEQUENCE [LARGE SCALE GENOMIC DNA]</scope>
    <source>
        <strain>ATCC 58785 / CBS 6054 / NBRC 10063 / NRRL Y-11545</strain>
    </source>
</reference>
<sequence>MKDSTEALNSIAFAVDTTLSSILPSSLAPPSAPPATSSFLKSIWYAFWWLWSMVVFKIMNIILLYIPSKIMNALSINFEITLNLSSILVALSAIITVCFLVVRYKYLTGYSKDTSDRKTKGKVNPSASNINLKNQSLDYVDQKKGHRRTTNYLDEFLSAIKVFGYLEKSVFHELTKNMTTQKLSHDEILYLDEKLGFSIVVEGVMQVYTRITENSNVSGGFDPDDDNELNYEKDDVLIIGNQRYQLLNEVKSGAPLSSLVSVLDLLKPVDSEDSTSDMLHSFNISDDDNISKIPEISPISLPFQGIHAGAKDDSVPPSPIIRPSKTKQLYPEIVARPKSRPHKEHTGHHLHHVHHSGATIAIIPYSAFQRVQSKYPKATSHIVTMVLARLYKVTFNTIHDYLGLTKEIMESEVKLNTTSSVRGANLPGYLFDGLLDKIYGANGINEASLSRKSDFQRASSVNLNKQKTTLCDAKSSRYVLLDSRLKSTHPGDLLSSVPLSRRSDYYQTHSHPLSADDPLVRSAFPSSKTLSSLSSPTSNLKRASSNLKFENIRDRSFSDDREETEETSLRIAVVESIFKILGISEKSTAMRNLSSFNSGRSSVSSSIVGLSNLMSADDKFDTNAARVRFDSYNGFSSTATSISRSSTPIKFYNTINQNQLHNHHMGDSVSGINISTLSRQHQANRNSSPTEFNFANVKSDFAKCLEIKSYGPNTTIVEQGSFNSGLYYVIDGSLDVLYRPSNHGEPSSNREDNLKKLYSVKSGGVAGYLSSVVGFRSLVTIRTSKKRGVIVAHISKSDYSKLMDRYYFLQLPVATKLKKLLSPQILTIDYALEWCHIPAGGVLCSQGDLANGFHIVLSGRFRVVRNKSDRYQGNTSDDDILGFSDTSMDCSPSSDINNEDLEVLGEYGHGESIGEVEVLTASRRTNSLIAVRDSETARIPRTLFEMLSLSNPSIMVKVSRIVASKVVYKDVLDQSSRNSTLIPSSTASHISNDYKTITILPTVSGLPVREFADKLVSALKAIGRNVIALDQASTLTHLGRHAFDERLAQLKLSGYFAYLEEEYETIVYICDTPLKSNWTSTCISQGDCILLLADAEDDVVATGIGDYERLLINLKTMARTDLCLLHPEKYVEPGSTSIWLKNRIWVQGHHHIEMEIIRKKDENSVKKRPNIISELASKIGSKTNPSIKSTLEDVRLKAISSFVKLNTSFVHSDRYKAVQPHKNDFLRLARILSNEAVGLVLGGGGSRGISHVGIVTALERHGIPVDLIGGTSIGSLVGGLYAKDYNIVSIYGRAKKFSKRVASLWRSVFDLTYPVTSYITGYEFNRGIWKIFGFTEIEDFWIRYFCNTTNITNSTMDIHESGYSWRFIRASMSLAGLLPPIAFQGCMLLDGGYLDNLPVSEMKKKGAKYIIAVDVGSADDRTPMNYGDTLSGFWVLFNRWNPFSKHPNVPNMMDIQMRLAYVASVNALEAAKKTNGVIYLRPPIDNYATLDFAKFDEIYHVGLNYADKLFSSWSKNGKLPAIAGMVDKAKIKSGDDKKVLYRRNSI</sequence>
<accession>A3LYZ4</accession>
<gene>
    <name type="primary">NTE1</name>
    <name type="ORF">PICST_33358</name>
</gene>
<proteinExistence type="inferred from homology"/>
<keyword id="KW-0256">Endoplasmic reticulum</keyword>
<keyword id="KW-0378">Hydrolase</keyword>
<keyword id="KW-0442">Lipid degradation</keyword>
<keyword id="KW-0443">Lipid metabolism</keyword>
<keyword id="KW-0472">Membrane</keyword>
<keyword id="KW-1185">Reference proteome</keyword>
<keyword id="KW-0677">Repeat</keyword>
<keyword id="KW-0812">Transmembrane</keyword>
<keyword id="KW-1133">Transmembrane helix</keyword>
<comment type="function">
    <text evidence="1">Intracellular phospholipase B that catalyzes the double deacylation of phosphatidylcholine (PC) to glycerophosphocholine (GroPCho). Plays an important role in membrane lipid homeostasis. Responsible for the rapid PC turnover in response to inositol, elevated temperatures, or when choline is present in the growth medium (By similarity).</text>
</comment>
<comment type="catalytic activity">
    <reaction>
        <text>a 1-acyl-sn-glycero-3-phosphocholine + H2O = sn-glycerol 3-phosphocholine + a fatty acid + H(+)</text>
        <dbReference type="Rhea" id="RHEA:15177"/>
        <dbReference type="ChEBI" id="CHEBI:15377"/>
        <dbReference type="ChEBI" id="CHEBI:15378"/>
        <dbReference type="ChEBI" id="CHEBI:16870"/>
        <dbReference type="ChEBI" id="CHEBI:28868"/>
        <dbReference type="ChEBI" id="CHEBI:58168"/>
        <dbReference type="EC" id="3.1.1.5"/>
    </reaction>
</comment>
<comment type="activity regulation">
    <text evidence="1">Inhibited by organophosphorus esters.</text>
</comment>
<comment type="subcellular location">
    <subcellularLocation>
        <location evidence="1">Endoplasmic reticulum membrane</location>
        <topology evidence="1">Multi-pass membrane protein</topology>
    </subcellularLocation>
</comment>
<comment type="similarity">
    <text evidence="4">Belongs to the NTE family.</text>
</comment>
<name>NTE1_PICST</name>
<feature type="chain" id="PRO_0000295329" description="Lysophospholipase NTE1">
    <location>
        <begin position="1"/>
        <end position="1546"/>
    </location>
</feature>
<feature type="topological domain" description="Cytoplasmic" evidence="1">
    <location>
        <begin position="1"/>
        <end position="45"/>
    </location>
</feature>
<feature type="transmembrane region" description="Helical" evidence="2">
    <location>
        <begin position="46"/>
        <end position="66"/>
    </location>
</feature>
<feature type="topological domain" description="Lumenal" evidence="1">
    <location>
        <begin position="67"/>
        <end position="81"/>
    </location>
</feature>
<feature type="transmembrane region" description="Helical" evidence="2">
    <location>
        <begin position="82"/>
        <end position="102"/>
    </location>
</feature>
<feature type="topological domain" description="Cytoplasmic" evidence="1">
    <location>
        <begin position="103"/>
        <end position="1546"/>
    </location>
</feature>
<feature type="domain" description="PNPLA" evidence="3">
    <location>
        <begin position="1239"/>
        <end position="1403"/>
    </location>
</feature>
<feature type="short sequence motif" description="GXGXXG" evidence="3">
    <location>
        <begin position="1243"/>
        <end position="1248"/>
    </location>
</feature>
<feature type="short sequence motif" description="GXSXG" evidence="3">
    <location>
        <begin position="1270"/>
        <end position="1274"/>
    </location>
</feature>
<feature type="short sequence motif" description="DGA/G" evidence="3">
    <location>
        <begin position="1390"/>
        <end position="1392"/>
    </location>
</feature>
<feature type="active site" description="Nucleophile" evidence="3">
    <location>
        <position position="1272"/>
    </location>
</feature>
<feature type="active site" description="Proton acceptor" evidence="3">
    <location>
        <position position="1390"/>
    </location>
</feature>
<feature type="binding site">
    <location>
        <begin position="689"/>
        <end position="820"/>
    </location>
    <ligand>
        <name>a nucleoside 3',5'-cyclic phosphate</name>
        <dbReference type="ChEBI" id="CHEBI:58464"/>
        <label>1</label>
    </ligand>
</feature>
<feature type="binding site">
    <location>
        <begin position="816"/>
        <end position="965"/>
    </location>
    <ligand>
        <name>a nucleoside 3',5'-cyclic phosphate</name>
        <dbReference type="ChEBI" id="CHEBI:58464"/>
        <label>2</label>
    </ligand>
</feature>
<protein>
    <recommendedName>
        <fullName>Lysophospholipase NTE1</fullName>
        <ecNumber>3.1.1.5</ecNumber>
    </recommendedName>
    <alternativeName>
        <fullName>Intracellular phospholipase B</fullName>
    </alternativeName>
    <alternativeName>
        <fullName>Neuropathy target esterase homolog</fullName>
    </alternativeName>
</protein>